<sequence length="206" mass="23340">MNNIYQKDLGLQQYTKVFEDMLEFTSTRTPETNDEIWLVEHPAVFTQGKHGKPEHILNSHNIPIVATDRGGQVTYHGPGQAVIYFLLDIKRNKLGAKKLVTTVEQACINMLDKYYNLKAHIIDGAHGIYINNQKIASLGLRIKQGKSYHGIAINTNMDLTPFSYINPCGYSGLKMCQLANFYQEADIKKVQQQYTAEFVTLLNNSI</sequence>
<dbReference type="EC" id="2.3.1.181" evidence="1"/>
<dbReference type="EMBL" id="AM233362">
    <property type="protein sequence ID" value="CAJ79497.1"/>
    <property type="molecule type" value="Genomic_DNA"/>
</dbReference>
<dbReference type="RefSeq" id="WP_003015973.1">
    <property type="nucleotide sequence ID" value="NZ_CP009694.1"/>
</dbReference>
<dbReference type="SMR" id="Q2A3E7"/>
<dbReference type="KEGG" id="ftl:FTL_1058"/>
<dbReference type="UniPathway" id="UPA00538">
    <property type="reaction ID" value="UER00592"/>
</dbReference>
<dbReference type="Proteomes" id="UP000001944">
    <property type="component" value="Chromosome"/>
</dbReference>
<dbReference type="GO" id="GO:0005737">
    <property type="term" value="C:cytoplasm"/>
    <property type="evidence" value="ECO:0007669"/>
    <property type="project" value="UniProtKB-SubCell"/>
</dbReference>
<dbReference type="GO" id="GO:0033819">
    <property type="term" value="F:lipoyl(octanoyl) transferase activity"/>
    <property type="evidence" value="ECO:0007669"/>
    <property type="project" value="UniProtKB-EC"/>
</dbReference>
<dbReference type="GO" id="GO:0036211">
    <property type="term" value="P:protein modification process"/>
    <property type="evidence" value="ECO:0007669"/>
    <property type="project" value="InterPro"/>
</dbReference>
<dbReference type="CDD" id="cd16444">
    <property type="entry name" value="LipB"/>
    <property type="match status" value="1"/>
</dbReference>
<dbReference type="FunFam" id="3.30.930.10:FF:000020">
    <property type="entry name" value="Octanoyltransferase"/>
    <property type="match status" value="1"/>
</dbReference>
<dbReference type="Gene3D" id="3.30.930.10">
    <property type="entry name" value="Bira Bifunctional Protein, Domain 2"/>
    <property type="match status" value="1"/>
</dbReference>
<dbReference type="HAMAP" id="MF_00013">
    <property type="entry name" value="LipB"/>
    <property type="match status" value="1"/>
</dbReference>
<dbReference type="InterPro" id="IPR045864">
    <property type="entry name" value="aa-tRNA-synth_II/BPL/LPL"/>
</dbReference>
<dbReference type="InterPro" id="IPR004143">
    <property type="entry name" value="BPL_LPL_catalytic"/>
</dbReference>
<dbReference type="InterPro" id="IPR000544">
    <property type="entry name" value="Octanoyltransferase"/>
</dbReference>
<dbReference type="InterPro" id="IPR020605">
    <property type="entry name" value="Octanoyltransferase_CS"/>
</dbReference>
<dbReference type="NCBIfam" id="TIGR00214">
    <property type="entry name" value="lipB"/>
    <property type="match status" value="1"/>
</dbReference>
<dbReference type="NCBIfam" id="NF010922">
    <property type="entry name" value="PRK14342.1"/>
    <property type="match status" value="1"/>
</dbReference>
<dbReference type="PANTHER" id="PTHR10993:SF7">
    <property type="entry name" value="LIPOYLTRANSFERASE 2, MITOCHONDRIAL-RELATED"/>
    <property type="match status" value="1"/>
</dbReference>
<dbReference type="PANTHER" id="PTHR10993">
    <property type="entry name" value="OCTANOYLTRANSFERASE"/>
    <property type="match status" value="1"/>
</dbReference>
<dbReference type="Pfam" id="PF21948">
    <property type="entry name" value="LplA-B_cat"/>
    <property type="match status" value="1"/>
</dbReference>
<dbReference type="PIRSF" id="PIRSF016262">
    <property type="entry name" value="LPLase"/>
    <property type="match status" value="1"/>
</dbReference>
<dbReference type="SUPFAM" id="SSF55681">
    <property type="entry name" value="Class II aaRS and biotin synthetases"/>
    <property type="match status" value="1"/>
</dbReference>
<dbReference type="PROSITE" id="PS51733">
    <property type="entry name" value="BPL_LPL_CATALYTIC"/>
    <property type="match status" value="1"/>
</dbReference>
<dbReference type="PROSITE" id="PS01313">
    <property type="entry name" value="LIPB"/>
    <property type="match status" value="1"/>
</dbReference>
<accession>Q2A3E7</accession>
<reference key="1">
    <citation type="submission" date="2006-03" db="EMBL/GenBank/DDBJ databases">
        <title>Complete genome sequence of Francisella tularensis LVS (Live Vaccine Strain).</title>
        <authorList>
            <person name="Chain P."/>
            <person name="Larimer F."/>
            <person name="Land M."/>
            <person name="Stilwagen S."/>
            <person name="Larsson P."/>
            <person name="Bearden S."/>
            <person name="Chu M."/>
            <person name="Oyston P."/>
            <person name="Forsman M."/>
            <person name="Andersson S."/>
            <person name="Lindler L."/>
            <person name="Titball R."/>
            <person name="Garcia E."/>
        </authorList>
    </citation>
    <scope>NUCLEOTIDE SEQUENCE [LARGE SCALE GENOMIC DNA]</scope>
    <source>
        <strain>LVS</strain>
    </source>
</reference>
<evidence type="ECO:0000255" key="1">
    <source>
        <dbReference type="HAMAP-Rule" id="MF_00013"/>
    </source>
</evidence>
<evidence type="ECO:0000255" key="2">
    <source>
        <dbReference type="PROSITE-ProRule" id="PRU01067"/>
    </source>
</evidence>
<feature type="chain" id="PRO_0000242722" description="Octanoyltransferase">
    <location>
        <begin position="1"/>
        <end position="206"/>
    </location>
</feature>
<feature type="domain" description="BPL/LPL catalytic" evidence="2">
    <location>
        <begin position="30"/>
        <end position="206"/>
    </location>
</feature>
<feature type="active site" description="Acyl-thioester intermediate" evidence="1">
    <location>
        <position position="168"/>
    </location>
</feature>
<feature type="binding site" evidence="1">
    <location>
        <begin position="69"/>
        <end position="76"/>
    </location>
    <ligand>
        <name>substrate</name>
    </ligand>
</feature>
<feature type="binding site" evidence="1">
    <location>
        <begin position="137"/>
        <end position="139"/>
    </location>
    <ligand>
        <name>substrate</name>
    </ligand>
</feature>
<feature type="binding site" evidence="1">
    <location>
        <begin position="150"/>
        <end position="152"/>
    </location>
    <ligand>
        <name>substrate</name>
    </ligand>
</feature>
<feature type="site" description="Lowers pKa of active site Cys" evidence="1">
    <location>
        <position position="134"/>
    </location>
</feature>
<protein>
    <recommendedName>
        <fullName evidence="1">Octanoyltransferase</fullName>
        <ecNumber evidence="1">2.3.1.181</ecNumber>
    </recommendedName>
    <alternativeName>
        <fullName evidence="1">Lipoate-protein ligase B</fullName>
    </alternativeName>
    <alternativeName>
        <fullName evidence="1">Lipoyl/octanoyl transferase</fullName>
    </alternativeName>
    <alternativeName>
        <fullName evidence="1">Octanoyl-[acyl-carrier-protein]-protein N-octanoyltransferase</fullName>
    </alternativeName>
</protein>
<keyword id="KW-0012">Acyltransferase</keyword>
<keyword id="KW-0963">Cytoplasm</keyword>
<keyword id="KW-1185">Reference proteome</keyword>
<keyword id="KW-0808">Transferase</keyword>
<organism>
    <name type="scientific">Francisella tularensis subsp. holarctica (strain LVS)</name>
    <dbReference type="NCBI Taxonomy" id="376619"/>
    <lineage>
        <taxon>Bacteria</taxon>
        <taxon>Pseudomonadati</taxon>
        <taxon>Pseudomonadota</taxon>
        <taxon>Gammaproteobacteria</taxon>
        <taxon>Thiotrichales</taxon>
        <taxon>Francisellaceae</taxon>
        <taxon>Francisella</taxon>
    </lineage>
</organism>
<name>LIPB_FRATH</name>
<proteinExistence type="inferred from homology"/>
<comment type="function">
    <text evidence="1">Catalyzes the transfer of endogenously produced octanoic acid from octanoyl-acyl-carrier-protein onto the lipoyl domains of lipoate-dependent enzymes. Lipoyl-ACP can also act as a substrate although octanoyl-ACP is likely to be the physiological substrate.</text>
</comment>
<comment type="catalytic activity">
    <reaction evidence="1">
        <text>octanoyl-[ACP] + L-lysyl-[protein] = N(6)-octanoyl-L-lysyl-[protein] + holo-[ACP] + H(+)</text>
        <dbReference type="Rhea" id="RHEA:17665"/>
        <dbReference type="Rhea" id="RHEA-COMP:9636"/>
        <dbReference type="Rhea" id="RHEA-COMP:9685"/>
        <dbReference type="Rhea" id="RHEA-COMP:9752"/>
        <dbReference type="Rhea" id="RHEA-COMP:9928"/>
        <dbReference type="ChEBI" id="CHEBI:15378"/>
        <dbReference type="ChEBI" id="CHEBI:29969"/>
        <dbReference type="ChEBI" id="CHEBI:64479"/>
        <dbReference type="ChEBI" id="CHEBI:78463"/>
        <dbReference type="ChEBI" id="CHEBI:78809"/>
        <dbReference type="EC" id="2.3.1.181"/>
    </reaction>
</comment>
<comment type="pathway">
    <text evidence="1">Protein modification; protein lipoylation via endogenous pathway; protein N(6)-(lipoyl)lysine from octanoyl-[acyl-carrier-protein]: step 1/2.</text>
</comment>
<comment type="subcellular location">
    <subcellularLocation>
        <location evidence="1">Cytoplasm</location>
    </subcellularLocation>
</comment>
<comment type="miscellaneous">
    <text evidence="1">In the reaction, the free carboxyl group of octanoic acid is attached via an amide linkage to the epsilon-amino group of a specific lysine residue of lipoyl domains of lipoate-dependent enzymes.</text>
</comment>
<comment type="similarity">
    <text evidence="1">Belongs to the LipB family.</text>
</comment>
<gene>
    <name evidence="1" type="primary">lipB</name>
    <name type="ordered locus">FTL_1058</name>
</gene>